<proteinExistence type="inferred from homology"/>
<keyword id="KW-0029">Amino-acid transport</keyword>
<keyword id="KW-1003">Cell membrane</keyword>
<keyword id="KW-0472">Membrane</keyword>
<keyword id="KW-0812">Transmembrane</keyword>
<keyword id="KW-1133">Transmembrane helix</keyword>
<keyword id="KW-0813">Transport</keyword>
<feature type="chain" id="PRO_0000294013" description="Putative branched-chain amino acid carrier protein SAR1419">
    <location>
        <begin position="1"/>
        <end position="447"/>
    </location>
</feature>
<feature type="transmembrane region" description="Helical" evidence="2">
    <location>
        <begin position="6"/>
        <end position="26"/>
    </location>
</feature>
<feature type="transmembrane region" description="Helical" evidence="2">
    <location>
        <begin position="40"/>
        <end position="60"/>
    </location>
</feature>
<feature type="transmembrane region" description="Helical" evidence="2">
    <location>
        <begin position="74"/>
        <end position="94"/>
    </location>
</feature>
<feature type="transmembrane region" description="Helical" evidence="2">
    <location>
        <begin position="114"/>
        <end position="134"/>
    </location>
</feature>
<feature type="transmembrane region" description="Helical" evidence="2">
    <location>
        <begin position="143"/>
        <end position="163"/>
    </location>
</feature>
<feature type="transmembrane region" description="Helical" evidence="2">
    <location>
        <begin position="193"/>
        <end position="213"/>
    </location>
</feature>
<feature type="transmembrane region" description="Helical" evidence="2">
    <location>
        <begin position="229"/>
        <end position="249"/>
    </location>
</feature>
<feature type="transmembrane region" description="Helical" evidence="2">
    <location>
        <begin position="290"/>
        <end position="310"/>
    </location>
</feature>
<feature type="transmembrane region" description="Helical" evidence="2">
    <location>
        <begin position="326"/>
        <end position="346"/>
    </location>
</feature>
<feature type="transmembrane region" description="Helical" evidence="2">
    <location>
        <begin position="350"/>
        <end position="370"/>
    </location>
</feature>
<feature type="transmembrane region" description="Helical" evidence="2">
    <location>
        <begin position="382"/>
        <end position="402"/>
    </location>
</feature>
<feature type="transmembrane region" description="Helical" evidence="2">
    <location>
        <begin position="417"/>
        <end position="437"/>
    </location>
</feature>
<comment type="function">
    <text evidence="1 3">Component of the transport system for branched-chain amino acids (leucine, isoleucine and valine), which is coupled to a proton motive force (Potential). Contributes to NaCl tolerance (By similarity).</text>
</comment>
<comment type="subcellular location">
    <subcellularLocation>
        <location evidence="3">Cell membrane</location>
        <topology evidence="3">Multi-pass membrane protein</topology>
    </subcellularLocation>
</comment>
<comment type="similarity">
    <text evidence="3">Belongs to the branched chain amino acid transporter family.</text>
</comment>
<accession>Q6GH01</accession>
<dbReference type="EMBL" id="BX571856">
    <property type="protein sequence ID" value="CAG40416.1"/>
    <property type="molecule type" value="Genomic_DNA"/>
</dbReference>
<dbReference type="RefSeq" id="WP_001039267.1">
    <property type="nucleotide sequence ID" value="NC_002952.2"/>
</dbReference>
<dbReference type="KEGG" id="sar:SAR1419"/>
<dbReference type="HOGENOM" id="CLU_036807_0_1_9"/>
<dbReference type="Proteomes" id="UP000000596">
    <property type="component" value="Chromosome"/>
</dbReference>
<dbReference type="GO" id="GO:0005886">
    <property type="term" value="C:plasma membrane"/>
    <property type="evidence" value="ECO:0007669"/>
    <property type="project" value="UniProtKB-SubCell"/>
</dbReference>
<dbReference type="GO" id="GO:0015188">
    <property type="term" value="F:L-isoleucine transmembrane transporter activity"/>
    <property type="evidence" value="ECO:0007669"/>
    <property type="project" value="TreeGrafter"/>
</dbReference>
<dbReference type="GO" id="GO:0015190">
    <property type="term" value="F:L-leucine transmembrane transporter activity"/>
    <property type="evidence" value="ECO:0007669"/>
    <property type="project" value="TreeGrafter"/>
</dbReference>
<dbReference type="GO" id="GO:0005304">
    <property type="term" value="F:L-valine transmembrane transporter activity"/>
    <property type="evidence" value="ECO:0007669"/>
    <property type="project" value="TreeGrafter"/>
</dbReference>
<dbReference type="GO" id="GO:0015818">
    <property type="term" value="P:isoleucine transport"/>
    <property type="evidence" value="ECO:0007669"/>
    <property type="project" value="TreeGrafter"/>
</dbReference>
<dbReference type="GO" id="GO:0015820">
    <property type="term" value="P:L-leucine transport"/>
    <property type="evidence" value="ECO:0007669"/>
    <property type="project" value="TreeGrafter"/>
</dbReference>
<dbReference type="Gene3D" id="1.20.1740.10">
    <property type="entry name" value="Amino acid/polyamine transporter I"/>
    <property type="match status" value="1"/>
</dbReference>
<dbReference type="InterPro" id="IPR004685">
    <property type="entry name" value="Brnchd-chn_aa_trnsp_Livcs"/>
</dbReference>
<dbReference type="NCBIfam" id="TIGR00796">
    <property type="entry name" value="livcs"/>
    <property type="match status" value="1"/>
</dbReference>
<dbReference type="PANTHER" id="PTHR30588:SF7">
    <property type="entry name" value="BRANCHED-CHAIN AMINO ACID CARRIER PROTEIN SAOUHSC_01411-RELATED"/>
    <property type="match status" value="1"/>
</dbReference>
<dbReference type="PANTHER" id="PTHR30588">
    <property type="entry name" value="BRANCHED-CHAIN AMINO ACID TRANSPORT SYSTEM 2 CARRIER PROTEIN"/>
    <property type="match status" value="1"/>
</dbReference>
<dbReference type="Pfam" id="PF05525">
    <property type="entry name" value="Branch_AA_trans"/>
    <property type="match status" value="1"/>
</dbReference>
<reference key="1">
    <citation type="journal article" date="2004" name="Proc. Natl. Acad. Sci. U.S.A.">
        <title>Complete genomes of two clinical Staphylococcus aureus strains: evidence for the rapid evolution of virulence and drug resistance.</title>
        <authorList>
            <person name="Holden M.T.G."/>
            <person name="Feil E.J."/>
            <person name="Lindsay J.A."/>
            <person name="Peacock S.J."/>
            <person name="Day N.P.J."/>
            <person name="Enright M.C."/>
            <person name="Foster T.J."/>
            <person name="Moore C.E."/>
            <person name="Hurst L."/>
            <person name="Atkin R."/>
            <person name="Barron A."/>
            <person name="Bason N."/>
            <person name="Bentley S.D."/>
            <person name="Chillingworth C."/>
            <person name="Chillingworth T."/>
            <person name="Churcher C."/>
            <person name="Clark L."/>
            <person name="Corton C."/>
            <person name="Cronin A."/>
            <person name="Doggett J."/>
            <person name="Dowd L."/>
            <person name="Feltwell T."/>
            <person name="Hance Z."/>
            <person name="Harris B."/>
            <person name="Hauser H."/>
            <person name="Holroyd S."/>
            <person name="Jagels K."/>
            <person name="James K.D."/>
            <person name="Lennard N."/>
            <person name="Line A."/>
            <person name="Mayes R."/>
            <person name="Moule S."/>
            <person name="Mungall K."/>
            <person name="Ormond D."/>
            <person name="Quail M.A."/>
            <person name="Rabbinowitsch E."/>
            <person name="Rutherford K.M."/>
            <person name="Sanders M."/>
            <person name="Sharp S."/>
            <person name="Simmonds M."/>
            <person name="Stevens K."/>
            <person name="Whitehead S."/>
            <person name="Barrell B.G."/>
            <person name="Spratt B.G."/>
            <person name="Parkhill J."/>
        </authorList>
    </citation>
    <scope>NUCLEOTIDE SEQUENCE [LARGE SCALE GENOMIC DNA]</scope>
    <source>
        <strain>MRSA252</strain>
    </source>
</reference>
<protein>
    <recommendedName>
        <fullName>Putative branched-chain amino acid carrier protein SAR1419</fullName>
    </recommendedName>
</protein>
<sequence>MNKNTWVIGFTLFAMFFGAGNLIFPPNLGLDSGQFFWPAILAFVLTGIGLPLLGVIVGALDKEGYIGALNKISPKFSILFLIIIYLTIGPLFAIPRTASTSFEMTITPIIHSNSSIALFIFTIIYFIVVLYICLNPSKLIDRIGSLLTPLLLITILAMIIKAYLDFSGNSAGKGNEALYHSNFSSFAEGFTQGYLTMDAIAAIAFSMIVVNAVKLTGITKTNQIFKQTLTAGLIAAIALIFIYISLGYIGNHMPVSDMKLNELKSHDRNIGTYLLTTMASTGFGSFGKYLLGIIVALACLTTACGLIVAVSEYFHRIVPKVSYKAFVLVFILMSFIIANQGLNAVISMSIPVLSIVYPVAITVVLLILIAKFIPTKRITQQIPVIIVFILSIFSVISKLGWLKINFIESLPLRAYSLEWFPVAIIATILGYLVGIFVKQDPIKYQQE</sequence>
<evidence type="ECO:0000250" key="1"/>
<evidence type="ECO:0000255" key="2"/>
<evidence type="ECO:0000305" key="3"/>
<gene>
    <name type="ordered locus">SAR1419</name>
</gene>
<organism>
    <name type="scientific">Staphylococcus aureus (strain MRSA252)</name>
    <dbReference type="NCBI Taxonomy" id="282458"/>
    <lineage>
        <taxon>Bacteria</taxon>
        <taxon>Bacillati</taxon>
        <taxon>Bacillota</taxon>
        <taxon>Bacilli</taxon>
        <taxon>Bacillales</taxon>
        <taxon>Staphylococcaceae</taxon>
        <taxon>Staphylococcus</taxon>
    </lineage>
</organism>
<name>BRNQL_STAAR</name>